<keyword id="KW-0963">Cytoplasm</keyword>
<keyword id="KW-0342">GTP-binding</keyword>
<keyword id="KW-0378">Hydrolase</keyword>
<keyword id="KW-0479">Metal-binding</keyword>
<keyword id="KW-0547">Nucleotide-binding</keyword>
<keyword id="KW-0690">Ribosome biogenesis</keyword>
<keyword id="KW-0694">RNA-binding</keyword>
<keyword id="KW-0699">rRNA-binding</keyword>
<keyword id="KW-0862">Zinc</keyword>
<proteinExistence type="inferred from homology"/>
<sequence>MSDTPPDYPTLQSIGWPWPGPPEEAAWQAIFAAHPQALPARVVEQHRTGYVAADTPQASVKAESLPEWQRPRFPSHERAAVGDWVLMEGKRIVALLPRRTSIKRGAAGEHYHQQVIAANIDTVFIVCGLDADFNPRRIERYLLLVGGGGAQPVVVLTKADQTEYAEDALAVLEELEAQNIPLRAVNAKDPDSVAALRPWLGDGRTAVLVGSSGAGKSTLTNTLLGTQKMKTNAVRENDSRGRHTTTHRALIPLPSGACLIDTPGMRELKPTGEEDLAEGGFSDVEALAAQCRFNDCAHIAEPGCAVRAAIDAGELDPERVANYMKLRVEVASAAEKLATRVAQNNRGKGSGKRPASVDRPGRR</sequence>
<comment type="function">
    <text evidence="1">One of several proteins that assist in the late maturation steps of the functional core of the 30S ribosomal subunit. Helps release RbfA from mature subunits. May play a role in the assembly of ribosomal proteins into the subunit. Circularly permuted GTPase that catalyzes slow GTP hydrolysis, GTPase activity is stimulated by the 30S ribosomal subunit.</text>
</comment>
<comment type="cofactor">
    <cofactor evidence="1">
        <name>Zn(2+)</name>
        <dbReference type="ChEBI" id="CHEBI:29105"/>
    </cofactor>
    <text evidence="1">Binds 1 zinc ion per subunit.</text>
</comment>
<comment type="subunit">
    <text evidence="1">Monomer. Associates with 30S ribosomal subunit, binds 16S rRNA.</text>
</comment>
<comment type="subcellular location">
    <subcellularLocation>
        <location evidence="1">Cytoplasm</location>
    </subcellularLocation>
</comment>
<comment type="similarity">
    <text evidence="1">Belongs to the TRAFAC class YlqF/YawG GTPase family. RsgA subfamily.</text>
</comment>
<reference key="1">
    <citation type="journal article" date="2005" name="J. Bacteriol.">
        <title>Insights into genome plasticity and pathogenicity of the plant pathogenic Bacterium Xanthomonas campestris pv. vesicatoria revealed by the complete genome sequence.</title>
        <authorList>
            <person name="Thieme F."/>
            <person name="Koebnik R."/>
            <person name="Bekel T."/>
            <person name="Berger C."/>
            <person name="Boch J."/>
            <person name="Buettner D."/>
            <person name="Caldana C."/>
            <person name="Gaigalat L."/>
            <person name="Goesmann A."/>
            <person name="Kay S."/>
            <person name="Kirchner O."/>
            <person name="Lanz C."/>
            <person name="Linke B."/>
            <person name="McHardy A.C."/>
            <person name="Meyer F."/>
            <person name="Mittenhuber G."/>
            <person name="Nies D.H."/>
            <person name="Niesbach-Kloesgen U."/>
            <person name="Patschkowski T."/>
            <person name="Rueckert C."/>
            <person name="Rupp O."/>
            <person name="Schneiker S."/>
            <person name="Schuster S.C."/>
            <person name="Vorhoelter F.J."/>
            <person name="Weber E."/>
            <person name="Puehler A."/>
            <person name="Bonas U."/>
            <person name="Bartels D."/>
            <person name="Kaiser O."/>
        </authorList>
    </citation>
    <scope>NUCLEOTIDE SEQUENCE [LARGE SCALE GENOMIC DNA]</scope>
    <source>
        <strain>85-10</strain>
    </source>
</reference>
<gene>
    <name evidence="1" type="primary">rsgA</name>
    <name type="ordered locus">XCV3621</name>
</gene>
<dbReference type="EC" id="3.6.1.-" evidence="1"/>
<dbReference type="EMBL" id="AM039952">
    <property type="protein sequence ID" value="CAJ25352.1"/>
    <property type="molecule type" value="Genomic_DNA"/>
</dbReference>
<dbReference type="RefSeq" id="WP_011348548.1">
    <property type="nucleotide sequence ID" value="NZ_CP017190.1"/>
</dbReference>
<dbReference type="SMR" id="Q3BPG1"/>
<dbReference type="STRING" id="456327.BJD11_04590"/>
<dbReference type="KEGG" id="xcv:XCV3621"/>
<dbReference type="eggNOG" id="COG1162">
    <property type="taxonomic scope" value="Bacteria"/>
</dbReference>
<dbReference type="HOGENOM" id="CLU_033617_0_1_6"/>
<dbReference type="Proteomes" id="UP000007069">
    <property type="component" value="Chromosome"/>
</dbReference>
<dbReference type="GO" id="GO:0005737">
    <property type="term" value="C:cytoplasm"/>
    <property type="evidence" value="ECO:0007669"/>
    <property type="project" value="UniProtKB-SubCell"/>
</dbReference>
<dbReference type="GO" id="GO:0005525">
    <property type="term" value="F:GTP binding"/>
    <property type="evidence" value="ECO:0007669"/>
    <property type="project" value="UniProtKB-UniRule"/>
</dbReference>
<dbReference type="GO" id="GO:0003924">
    <property type="term" value="F:GTPase activity"/>
    <property type="evidence" value="ECO:0007669"/>
    <property type="project" value="UniProtKB-UniRule"/>
</dbReference>
<dbReference type="GO" id="GO:0046872">
    <property type="term" value="F:metal ion binding"/>
    <property type="evidence" value="ECO:0007669"/>
    <property type="project" value="UniProtKB-KW"/>
</dbReference>
<dbReference type="GO" id="GO:0019843">
    <property type="term" value="F:rRNA binding"/>
    <property type="evidence" value="ECO:0007669"/>
    <property type="project" value="UniProtKB-KW"/>
</dbReference>
<dbReference type="GO" id="GO:0042274">
    <property type="term" value="P:ribosomal small subunit biogenesis"/>
    <property type="evidence" value="ECO:0007669"/>
    <property type="project" value="UniProtKB-UniRule"/>
</dbReference>
<dbReference type="CDD" id="cd01854">
    <property type="entry name" value="YjeQ_EngC"/>
    <property type="match status" value="1"/>
</dbReference>
<dbReference type="Gene3D" id="3.40.50.300">
    <property type="entry name" value="P-loop containing nucleotide triphosphate hydrolases"/>
    <property type="match status" value="1"/>
</dbReference>
<dbReference type="Gene3D" id="1.10.40.50">
    <property type="entry name" value="Probable gtpase engc, domain 3"/>
    <property type="match status" value="1"/>
</dbReference>
<dbReference type="HAMAP" id="MF_01820">
    <property type="entry name" value="GTPase_RsgA"/>
    <property type="match status" value="1"/>
</dbReference>
<dbReference type="InterPro" id="IPR030378">
    <property type="entry name" value="G_CP_dom"/>
</dbReference>
<dbReference type="InterPro" id="IPR027417">
    <property type="entry name" value="P-loop_NTPase"/>
</dbReference>
<dbReference type="InterPro" id="IPR004881">
    <property type="entry name" value="Ribosome_biogen_GTPase_RsgA"/>
</dbReference>
<dbReference type="InterPro" id="IPR010914">
    <property type="entry name" value="RsgA_GTPase_dom"/>
</dbReference>
<dbReference type="NCBIfam" id="TIGR00157">
    <property type="entry name" value="ribosome small subunit-dependent GTPase A"/>
    <property type="match status" value="1"/>
</dbReference>
<dbReference type="PANTHER" id="PTHR32120">
    <property type="entry name" value="SMALL RIBOSOMAL SUBUNIT BIOGENESIS GTPASE RSGA"/>
    <property type="match status" value="1"/>
</dbReference>
<dbReference type="PANTHER" id="PTHR32120:SF10">
    <property type="entry name" value="SMALL RIBOSOMAL SUBUNIT BIOGENESIS GTPASE RSGA"/>
    <property type="match status" value="1"/>
</dbReference>
<dbReference type="Pfam" id="PF03193">
    <property type="entry name" value="RsgA_GTPase"/>
    <property type="match status" value="1"/>
</dbReference>
<dbReference type="SUPFAM" id="SSF52540">
    <property type="entry name" value="P-loop containing nucleoside triphosphate hydrolases"/>
    <property type="match status" value="1"/>
</dbReference>
<dbReference type="PROSITE" id="PS50936">
    <property type="entry name" value="ENGC_GTPASE"/>
    <property type="match status" value="1"/>
</dbReference>
<dbReference type="PROSITE" id="PS51721">
    <property type="entry name" value="G_CP"/>
    <property type="match status" value="1"/>
</dbReference>
<feature type="chain" id="PRO_1000188150" description="Small ribosomal subunit biogenesis GTPase RsgA">
    <location>
        <begin position="1"/>
        <end position="363"/>
    </location>
</feature>
<feature type="domain" description="CP-type G" evidence="2">
    <location>
        <begin position="112"/>
        <end position="268"/>
    </location>
</feature>
<feature type="region of interest" description="Disordered" evidence="3">
    <location>
        <begin position="340"/>
        <end position="363"/>
    </location>
</feature>
<feature type="binding site" evidence="1">
    <location>
        <begin position="157"/>
        <end position="160"/>
    </location>
    <ligand>
        <name>GTP</name>
        <dbReference type="ChEBI" id="CHEBI:37565"/>
    </ligand>
</feature>
<feature type="binding site" evidence="1">
    <location>
        <begin position="210"/>
        <end position="218"/>
    </location>
    <ligand>
        <name>GTP</name>
        <dbReference type="ChEBI" id="CHEBI:37565"/>
    </ligand>
</feature>
<feature type="binding site" evidence="1">
    <location>
        <position position="291"/>
    </location>
    <ligand>
        <name>Zn(2+)</name>
        <dbReference type="ChEBI" id="CHEBI:29105"/>
    </ligand>
</feature>
<feature type="binding site" evidence="1">
    <location>
        <position position="296"/>
    </location>
    <ligand>
        <name>Zn(2+)</name>
        <dbReference type="ChEBI" id="CHEBI:29105"/>
    </ligand>
</feature>
<feature type="binding site" evidence="1">
    <location>
        <position position="298"/>
    </location>
    <ligand>
        <name>Zn(2+)</name>
        <dbReference type="ChEBI" id="CHEBI:29105"/>
    </ligand>
</feature>
<feature type="binding site" evidence="1">
    <location>
        <position position="304"/>
    </location>
    <ligand>
        <name>Zn(2+)</name>
        <dbReference type="ChEBI" id="CHEBI:29105"/>
    </ligand>
</feature>
<accession>Q3BPG1</accession>
<evidence type="ECO:0000255" key="1">
    <source>
        <dbReference type="HAMAP-Rule" id="MF_01820"/>
    </source>
</evidence>
<evidence type="ECO:0000255" key="2">
    <source>
        <dbReference type="PROSITE-ProRule" id="PRU01058"/>
    </source>
</evidence>
<evidence type="ECO:0000256" key="3">
    <source>
        <dbReference type="SAM" id="MobiDB-lite"/>
    </source>
</evidence>
<name>RSGA_XANE5</name>
<organism>
    <name type="scientific">Xanthomonas euvesicatoria pv. vesicatoria (strain 85-10)</name>
    <name type="common">Xanthomonas campestris pv. vesicatoria</name>
    <dbReference type="NCBI Taxonomy" id="316273"/>
    <lineage>
        <taxon>Bacteria</taxon>
        <taxon>Pseudomonadati</taxon>
        <taxon>Pseudomonadota</taxon>
        <taxon>Gammaproteobacteria</taxon>
        <taxon>Lysobacterales</taxon>
        <taxon>Lysobacteraceae</taxon>
        <taxon>Xanthomonas</taxon>
    </lineage>
</organism>
<protein>
    <recommendedName>
        <fullName evidence="1">Small ribosomal subunit biogenesis GTPase RsgA</fullName>
        <ecNumber evidence="1">3.6.1.-</ecNumber>
    </recommendedName>
</protein>